<comment type="function">
    <text evidence="1">Essential component of the helicase/primase complex. Unwinds the DNA at the replication forks and generates single-stranded DNA for both leading and lagging strand synthesis. The primase initiates primer synthesis and thereby produces large amount of short RNA primers on the lagging strand that the polymerase elongates using dNTPs.</text>
</comment>
<comment type="subunit">
    <text evidence="1">Associates with the helicase and the primase-associated factor to form the helicase-primase factor.</text>
</comment>
<comment type="subcellular location">
    <subcellularLocation>
        <location evidence="1">Host nucleus</location>
    </subcellularLocation>
    <text evidence="1">Requires the presence of the primase associated factor to properly localize in the host cell nucleus.</text>
</comment>
<comment type="similarity">
    <text evidence="1">Belongs to the herpesviridae DNA primase family.</text>
</comment>
<reference key="1">
    <citation type="journal article" date="1984" name="Nature">
        <title>DNA sequence and expression of the B95-8 Epstein-Barr virus genome.</title>
        <authorList>
            <person name="Baer R."/>
            <person name="Bankier A.T."/>
            <person name="Biggin M.D."/>
            <person name="Deininger P.L."/>
            <person name="Farrell P.J."/>
            <person name="Gibson T.J."/>
            <person name="Hatfull G."/>
            <person name="Hudson G.S."/>
            <person name="Satchwell S.C."/>
            <person name="Seguin C."/>
            <person name="Tuffnell P.S."/>
            <person name="Barrell B.G."/>
        </authorList>
    </citation>
    <scope>NUCLEOTIDE SEQUENCE [LARGE SCALE GENOMIC DNA]</scope>
</reference>
<reference key="2">
    <citation type="journal article" date="2003" name="Virology">
        <title>Updated Epstein-Barr virus (EBV) DNA sequence and analysis of a promoter for the BART (CST, BARF0) RNAs of EBV.</title>
        <authorList>
            <person name="de Jesus O."/>
            <person name="Smith P.R."/>
            <person name="Spender L.C."/>
            <person name="Elgueta Karstegl C."/>
            <person name="Niller H.H."/>
            <person name="Huang D."/>
            <person name="Farrell P.J."/>
        </authorList>
    </citation>
    <scope>GENOME REANNOTATION</scope>
</reference>
<keyword id="KW-0235">DNA replication</keyword>
<keyword id="KW-1048">Host nucleus</keyword>
<keyword id="KW-0479">Metal-binding</keyword>
<keyword id="KW-1185">Reference proteome</keyword>
<keyword id="KW-0808">Transferase</keyword>
<keyword id="KW-0862">Zinc</keyword>
<keyword id="KW-0863">Zinc-finger</keyword>
<sequence>MSAPVVIKALVASNTDIAEAILDAILSRPDEGFRLFCLCHNASPLHHVAGSLVELQLHLPKKRLTSQSRCGLVLTLHLPAEEAFPFLRGLTPLTADRLSTYLDRAGALRSLTPLVELLTLSAKKQPQGDARGRVAWLRPKIVGCLRRIYRVNISARWFISTFGSHEAQFVLVTAAYYFWGIPCTIETLAHLTELFTSESGQSLAAVTSLAELGEVFGSSAWAEQTEAFAHFAHEKLRRDSREIRAVARTIDAYRGRLPLASADLVRYVYLAHAQCFNEGTFKRYSQLTSMGEIGCLPSGGVVLPSLLDRGFAEHMRTYFTRETYLAEHVRVQQLKIRMEPPAPYTWDPDPDDGLMRAWAGLSVDVARELVELARWHADEGPTYPPTLQGFLCLAGQATCRGQWNPKEQFLPPTVLRRVQRLPVFLCHFADRHYFVMTAADPFSSHLAEVVSTPTNCRLPDTCLTRALSYTPVYYSQNSLSEQLFVSRHEYFNPRLPVCNLVLDLDLKIKGAPWSLEEIYDLCRTVRREVLRLMRRLGPVSRAHPVYFFKSACPPADPDNMEDVLPFCICTGKLGFRVITPLPRGHAIVGTSAVQGFVSVLQKLMGLTACLRRMRHKIKEIGAPLFDSGVYHAGRCIRLPHTYKVDRGGGLSRQLRLFVCHPEEEDKHSYVKNALNIQNLLHHSLHVGWPAPKTFCYHIADDGRDYLIQRTRETLPPTVENVCAMIEGHLGLDLVAWVSSCIWPSLMSTLATAVPEDKFPQFLHVTFEQTGPNLVQVCHARGRNFACLRHTHRASSKNVRVFLVLYYTSQAITVTFMSQCFAGRCGANQPTAHFSISVPASRIINRAEASQDSTTSQLARRRDRQDGSFSETLPN</sequence>
<protein>
    <recommendedName>
        <fullName evidence="1">DNA primase</fullName>
        <ecNumber evidence="1">2.7.7.-</ecNumber>
    </recommendedName>
</protein>
<organism>
    <name type="scientific">Epstein-Barr virus (strain B95-8)</name>
    <name type="common">HHV-4</name>
    <name type="synonym">Human herpesvirus 4</name>
    <dbReference type="NCBI Taxonomy" id="10377"/>
    <lineage>
        <taxon>Viruses</taxon>
        <taxon>Duplodnaviria</taxon>
        <taxon>Heunggongvirae</taxon>
        <taxon>Peploviricota</taxon>
        <taxon>Herviviricetes</taxon>
        <taxon>Herpesvirales</taxon>
        <taxon>Orthoherpesviridae</taxon>
        <taxon>Gammaherpesvirinae</taxon>
        <taxon>Lymphocryptovirus</taxon>
        <taxon>Lymphocryptovirus humangamma4</taxon>
        <taxon>Epstein-Barr virus (strain GD1)</taxon>
    </lineage>
</organism>
<evidence type="ECO:0000255" key="1">
    <source>
        <dbReference type="HAMAP-Rule" id="MF_04011"/>
    </source>
</evidence>
<evidence type="ECO:0000256" key="2">
    <source>
        <dbReference type="SAM" id="MobiDB-lite"/>
    </source>
</evidence>
<proteinExistence type="inferred from homology"/>
<accession>P03193</accession>
<accession>Q777F5</accession>
<organismHost>
    <name type="scientific">Homo sapiens</name>
    <name type="common">Human</name>
    <dbReference type="NCBI Taxonomy" id="9606"/>
</organismHost>
<dbReference type="EC" id="2.7.7.-" evidence="1"/>
<dbReference type="EMBL" id="V01555">
    <property type="protein sequence ID" value="CAA24848.1"/>
    <property type="molecule type" value="Genomic_DNA"/>
</dbReference>
<dbReference type="EMBL" id="AJ507799">
    <property type="protein sequence ID" value="CAD53412.1"/>
    <property type="molecule type" value="Genomic_DNA"/>
</dbReference>
<dbReference type="PIR" id="D43041">
    <property type="entry name" value="QQBE15"/>
</dbReference>
<dbReference type="RefSeq" id="YP_401662.1">
    <property type="nucleotide sequence ID" value="NC_007605.1"/>
</dbReference>
<dbReference type="BioGRID" id="971772">
    <property type="interactions" value="1"/>
</dbReference>
<dbReference type="IntAct" id="P03193">
    <property type="interactions" value="3"/>
</dbReference>
<dbReference type="MINT" id="P03193"/>
<dbReference type="DNASU" id="3783730"/>
<dbReference type="GeneID" id="3783730"/>
<dbReference type="KEGG" id="vg:3783730"/>
<dbReference type="Proteomes" id="UP000153037">
    <property type="component" value="Segment"/>
</dbReference>
<dbReference type="GO" id="GO:0042025">
    <property type="term" value="C:host cell nucleus"/>
    <property type="evidence" value="ECO:0007669"/>
    <property type="project" value="UniProtKB-SubCell"/>
</dbReference>
<dbReference type="GO" id="GO:0003899">
    <property type="term" value="F:DNA-directed RNA polymerase activity"/>
    <property type="evidence" value="ECO:0007669"/>
    <property type="project" value="InterPro"/>
</dbReference>
<dbReference type="GO" id="GO:0008270">
    <property type="term" value="F:zinc ion binding"/>
    <property type="evidence" value="ECO:0007669"/>
    <property type="project" value="UniProtKB-KW"/>
</dbReference>
<dbReference type="GO" id="GO:0039686">
    <property type="term" value="P:bidirectional double-stranded viral DNA replication"/>
    <property type="evidence" value="ECO:0000314"/>
    <property type="project" value="UniProtKB"/>
</dbReference>
<dbReference type="GO" id="GO:0006260">
    <property type="term" value="P:DNA replication"/>
    <property type="evidence" value="ECO:0007669"/>
    <property type="project" value="UniProtKB-KW"/>
</dbReference>
<dbReference type="HAMAP" id="MF_04011">
    <property type="entry name" value="HSV_PRIM"/>
    <property type="match status" value="1"/>
</dbReference>
<dbReference type="InterPro" id="IPR033685">
    <property type="entry name" value="HSV_PRIM"/>
</dbReference>
<dbReference type="Pfam" id="PF03121">
    <property type="entry name" value="Herpes_UL52"/>
    <property type="match status" value="1"/>
</dbReference>
<name>PRIM_EBVB9</name>
<feature type="chain" id="PRO_0000116113" description="DNA primase">
    <location>
        <begin position="1"/>
        <end position="874"/>
    </location>
</feature>
<feature type="zinc finger region" description="CHC2-type" evidence="1">
    <location>
        <begin position="786"/>
        <end position="824"/>
    </location>
</feature>
<feature type="region of interest" description="Disordered" evidence="2">
    <location>
        <begin position="848"/>
        <end position="874"/>
    </location>
</feature>
<feature type="compositionally biased region" description="Polar residues" evidence="2">
    <location>
        <begin position="848"/>
        <end position="857"/>
    </location>
</feature>
<feature type="site" description="Essential for primase activity" evidence="1">
    <location>
        <position position="503"/>
    </location>
</feature>
<feature type="site" description="Essential for primase activity" evidence="1">
    <location>
        <position position="505"/>
    </location>
</feature>
<gene>
    <name type="ORF">BSLF1</name>
</gene>